<name>TRMY_METJA</name>
<gene>
    <name evidence="1" type="primary">trmY</name>
    <name type="ordered locus">MJ1640</name>
</gene>
<sequence>MREFIFKANKTITSSDINLKDLPGSCGRLDLLCRCVSDAFFLSHDIRRDVVFYAVLYGQPNPPVCIKFVGSELKKVSPDERNIAIFIKKALKKFEELDEEQRKDWNQSTPGIYVRRLGFRNLVLEKLEEGKNIYYLHMNGEDVENVDIENPVFIIGDHIGIGEEDERFLDEIKAKRISLSPLELHANHCITIIHNVLDKKRICEI</sequence>
<comment type="function">
    <text evidence="1 3 4">Specifically catalyzes the N1-methylation of pseudouridine at position 54 (Psi54) in tRNAs.</text>
</comment>
<comment type="catalytic activity">
    <reaction evidence="1 3 4">
        <text>pseudouridine(54) in tRNA + S-adenosyl-L-methionine = N(1)-methylpseudouridine(54) in tRNA + S-adenosyl-L-homocysteine + H(+)</text>
        <dbReference type="Rhea" id="RHEA:55292"/>
        <dbReference type="Rhea" id="RHEA-COMP:14140"/>
        <dbReference type="Rhea" id="RHEA-COMP:14141"/>
        <dbReference type="ChEBI" id="CHEBI:15378"/>
        <dbReference type="ChEBI" id="CHEBI:57856"/>
        <dbReference type="ChEBI" id="CHEBI:59789"/>
        <dbReference type="ChEBI" id="CHEBI:65314"/>
        <dbReference type="ChEBI" id="CHEBI:74890"/>
        <dbReference type="EC" id="2.1.1.257"/>
    </reaction>
</comment>
<comment type="subunit">
    <text evidence="1 2">Homodimer.</text>
</comment>
<comment type="subcellular location">
    <subcellularLocation>
        <location evidence="1">Cytoplasm</location>
    </subcellularLocation>
</comment>
<comment type="similarity">
    <text evidence="1">Belongs to the methyltransferase superfamily. TrmY family.</text>
</comment>
<keyword id="KW-0002">3D-structure</keyword>
<keyword id="KW-0963">Cytoplasm</keyword>
<keyword id="KW-0489">Methyltransferase</keyword>
<keyword id="KW-1185">Reference proteome</keyword>
<keyword id="KW-0949">S-adenosyl-L-methionine</keyword>
<keyword id="KW-0808">Transferase</keyword>
<keyword id="KW-0819">tRNA processing</keyword>
<dbReference type="EC" id="2.1.1.257" evidence="1"/>
<dbReference type="EMBL" id="L77117">
    <property type="protein sequence ID" value="AAB99660.1"/>
    <property type="molecule type" value="Genomic_DNA"/>
</dbReference>
<dbReference type="PIR" id="F64504">
    <property type="entry name" value="F64504"/>
</dbReference>
<dbReference type="RefSeq" id="WP_010871164.1">
    <property type="nucleotide sequence ID" value="NC_000909.1"/>
</dbReference>
<dbReference type="PDB" id="3AI9">
    <property type="method" value="X-ray"/>
    <property type="resolution" value="1.55 A"/>
    <property type="chains" value="X=1-205"/>
</dbReference>
<dbReference type="PDB" id="3AIA">
    <property type="method" value="X-ray"/>
    <property type="resolution" value="1.40 A"/>
    <property type="chains" value="A/B=1-205"/>
</dbReference>
<dbReference type="PDBsum" id="3AI9"/>
<dbReference type="PDBsum" id="3AIA"/>
<dbReference type="SMR" id="Q59034"/>
<dbReference type="STRING" id="243232.MJ_1640"/>
<dbReference type="PaxDb" id="243232-MJ_1640"/>
<dbReference type="EnsemblBacteria" id="AAB99660">
    <property type="protein sequence ID" value="AAB99660"/>
    <property type="gene ID" value="MJ_1640"/>
</dbReference>
<dbReference type="GeneID" id="1452549"/>
<dbReference type="KEGG" id="mja:MJ_1640"/>
<dbReference type="eggNOG" id="arCOG01239">
    <property type="taxonomic scope" value="Archaea"/>
</dbReference>
<dbReference type="HOGENOM" id="CLU_107018_0_0_2"/>
<dbReference type="InParanoid" id="Q59034"/>
<dbReference type="OrthoDB" id="27492at2157"/>
<dbReference type="PhylomeDB" id="Q59034"/>
<dbReference type="BRENDA" id="2.1.1.257">
    <property type="organism ID" value="3260"/>
</dbReference>
<dbReference type="EvolutionaryTrace" id="Q59034"/>
<dbReference type="Proteomes" id="UP000000805">
    <property type="component" value="Chromosome"/>
</dbReference>
<dbReference type="GO" id="GO:0005737">
    <property type="term" value="C:cytoplasm"/>
    <property type="evidence" value="ECO:0007669"/>
    <property type="project" value="UniProtKB-SubCell"/>
</dbReference>
<dbReference type="GO" id="GO:0008757">
    <property type="term" value="F:S-adenosylmethionine-dependent methyltransferase activity"/>
    <property type="evidence" value="ECO:0000314"/>
    <property type="project" value="UniProtKB"/>
</dbReference>
<dbReference type="GO" id="GO:0008175">
    <property type="term" value="F:tRNA methyltransferase activity"/>
    <property type="evidence" value="ECO:0000314"/>
    <property type="project" value="UniProtKB"/>
</dbReference>
<dbReference type="GO" id="GO:0030488">
    <property type="term" value="P:tRNA methylation"/>
    <property type="evidence" value="ECO:0000314"/>
    <property type="project" value="UniProtKB"/>
</dbReference>
<dbReference type="CDD" id="cd18087">
    <property type="entry name" value="TrmY-like"/>
    <property type="match status" value="1"/>
</dbReference>
<dbReference type="FunFam" id="3.40.1280.10:FF:000041">
    <property type="entry name" value="tRNA (pseudouridine(54)-N(1))-methyltransferase"/>
    <property type="match status" value="1"/>
</dbReference>
<dbReference type="Gene3D" id="3.40.1280.10">
    <property type="match status" value="1"/>
</dbReference>
<dbReference type="HAMAP" id="MF_00587">
    <property type="entry name" value="tRNA_methyltr_TrmY"/>
    <property type="match status" value="1"/>
</dbReference>
<dbReference type="InterPro" id="IPR029028">
    <property type="entry name" value="Alpha/beta_knot_MTases"/>
</dbReference>
<dbReference type="InterPro" id="IPR007158">
    <property type="entry name" value="TrmY"/>
</dbReference>
<dbReference type="InterPro" id="IPR029026">
    <property type="entry name" value="tRNA_m1G_MTases_N"/>
</dbReference>
<dbReference type="NCBIfam" id="NF002560">
    <property type="entry name" value="PRK02135.1"/>
    <property type="match status" value="1"/>
</dbReference>
<dbReference type="PANTHER" id="PTHR40703">
    <property type="entry name" value="TRNA (PSEUDOURIDINE(54)-N(1))-METHYLTRANSFERASE"/>
    <property type="match status" value="1"/>
</dbReference>
<dbReference type="PANTHER" id="PTHR40703:SF1">
    <property type="entry name" value="TRNA (PSEUDOURIDINE(54)-N(1))-METHYLTRANSFERASE"/>
    <property type="match status" value="1"/>
</dbReference>
<dbReference type="Pfam" id="PF04013">
    <property type="entry name" value="Methyltrn_RNA_2"/>
    <property type="match status" value="1"/>
</dbReference>
<dbReference type="SUPFAM" id="SSF75217">
    <property type="entry name" value="alpha/beta knot"/>
    <property type="match status" value="1"/>
</dbReference>
<organism>
    <name type="scientific">Methanocaldococcus jannaschii (strain ATCC 43067 / DSM 2661 / JAL-1 / JCM 10045 / NBRC 100440)</name>
    <name type="common">Methanococcus jannaschii</name>
    <dbReference type="NCBI Taxonomy" id="243232"/>
    <lineage>
        <taxon>Archaea</taxon>
        <taxon>Methanobacteriati</taxon>
        <taxon>Methanobacteriota</taxon>
        <taxon>Methanomada group</taxon>
        <taxon>Methanococci</taxon>
        <taxon>Methanococcales</taxon>
        <taxon>Methanocaldococcaceae</taxon>
        <taxon>Methanocaldococcus</taxon>
    </lineage>
</organism>
<proteinExistence type="evidence at protein level"/>
<feature type="chain" id="PRO_0000157948" description="tRNA (pseudouridine(54)-N(1))-methyltransferase">
    <location>
        <begin position="1"/>
        <end position="205"/>
    </location>
</feature>
<feature type="binding site" evidence="1 2">
    <location>
        <position position="136"/>
    </location>
    <ligand>
        <name>S-adenosyl-L-methionine</name>
        <dbReference type="ChEBI" id="CHEBI:59789"/>
    </ligand>
</feature>
<feature type="binding site" evidence="1 2">
    <location>
        <position position="156"/>
    </location>
    <ligand>
        <name>S-adenosyl-L-methionine</name>
        <dbReference type="ChEBI" id="CHEBI:59789"/>
    </ligand>
</feature>
<feature type="binding site">
    <location>
        <begin position="179"/>
        <end position="184"/>
    </location>
    <ligand>
        <name>S-adenosyl-L-methionine</name>
        <dbReference type="ChEBI" id="CHEBI:59789"/>
    </ligand>
</feature>
<feature type="binding site" evidence="1 2">
    <location>
        <position position="189"/>
    </location>
    <ligand>
        <name>S-adenosyl-L-methionine</name>
        <dbReference type="ChEBI" id="CHEBI:59789"/>
    </ligand>
</feature>
<feature type="strand" evidence="5">
    <location>
        <begin position="2"/>
        <end position="10"/>
    </location>
</feature>
<feature type="helix" evidence="5">
    <location>
        <begin position="19"/>
        <end position="21"/>
    </location>
</feature>
<feature type="turn" evidence="5">
    <location>
        <begin position="22"/>
        <end position="27"/>
    </location>
</feature>
<feature type="helix" evidence="5">
    <location>
        <begin position="29"/>
        <end position="40"/>
    </location>
</feature>
<feature type="strand" evidence="5">
    <location>
        <begin position="43"/>
        <end position="46"/>
    </location>
</feature>
<feature type="strand" evidence="5">
    <location>
        <begin position="50"/>
        <end position="56"/>
    </location>
</feature>
<feature type="strand" evidence="5">
    <location>
        <begin position="59"/>
        <end position="61"/>
    </location>
</feature>
<feature type="strand" evidence="5">
    <location>
        <begin position="64"/>
        <end position="69"/>
    </location>
</feature>
<feature type="turn" evidence="5">
    <location>
        <begin position="70"/>
        <end position="72"/>
    </location>
</feature>
<feature type="helix" evidence="5">
    <location>
        <begin position="80"/>
        <end position="96"/>
    </location>
</feature>
<feature type="helix" evidence="5">
    <location>
        <begin position="101"/>
        <end position="103"/>
    </location>
</feature>
<feature type="strand" evidence="5">
    <location>
        <begin position="106"/>
        <end position="109"/>
    </location>
</feature>
<feature type="strand" evidence="5">
    <location>
        <begin position="112"/>
        <end position="115"/>
    </location>
</feature>
<feature type="helix" evidence="5">
    <location>
        <begin position="119"/>
        <end position="128"/>
    </location>
</feature>
<feature type="strand" evidence="5">
    <location>
        <begin position="132"/>
        <end position="136"/>
    </location>
</feature>
<feature type="strand" evidence="5">
    <location>
        <begin position="140"/>
        <end position="142"/>
    </location>
</feature>
<feature type="helix" evidence="5">
    <location>
        <begin position="143"/>
        <end position="145"/>
    </location>
</feature>
<feature type="strand" evidence="5">
    <location>
        <begin position="150"/>
        <end position="156"/>
    </location>
</feature>
<feature type="helix" evidence="5">
    <location>
        <begin position="163"/>
        <end position="171"/>
    </location>
</feature>
<feature type="strand" evidence="5">
    <location>
        <begin position="175"/>
        <end position="178"/>
    </location>
</feature>
<feature type="helix" evidence="5">
    <location>
        <begin position="186"/>
        <end position="199"/>
    </location>
</feature>
<reference key="1">
    <citation type="journal article" date="1996" name="Science">
        <title>Complete genome sequence of the methanogenic archaeon, Methanococcus jannaschii.</title>
        <authorList>
            <person name="Bult C.J."/>
            <person name="White O."/>
            <person name="Olsen G.J."/>
            <person name="Zhou L."/>
            <person name="Fleischmann R.D."/>
            <person name="Sutton G.G."/>
            <person name="Blake J.A."/>
            <person name="FitzGerald L.M."/>
            <person name="Clayton R.A."/>
            <person name="Gocayne J.D."/>
            <person name="Kerlavage A.R."/>
            <person name="Dougherty B.A."/>
            <person name="Tomb J.-F."/>
            <person name="Adams M.D."/>
            <person name="Reich C.I."/>
            <person name="Overbeek R."/>
            <person name="Kirkness E.F."/>
            <person name="Weinstock K.G."/>
            <person name="Merrick J.M."/>
            <person name="Glodek A."/>
            <person name="Scott J.L."/>
            <person name="Geoghagen N.S.M."/>
            <person name="Weidman J.F."/>
            <person name="Fuhrmann J.L."/>
            <person name="Nguyen D."/>
            <person name="Utterback T.R."/>
            <person name="Kelley J.M."/>
            <person name="Peterson J.D."/>
            <person name="Sadow P.W."/>
            <person name="Hanna M.C."/>
            <person name="Cotton M.D."/>
            <person name="Roberts K.M."/>
            <person name="Hurst M.A."/>
            <person name="Kaine B.P."/>
            <person name="Borodovsky M."/>
            <person name="Klenk H.-P."/>
            <person name="Fraser C.M."/>
            <person name="Smith H.O."/>
            <person name="Woese C.R."/>
            <person name="Venter J.C."/>
        </authorList>
    </citation>
    <scope>NUCLEOTIDE SEQUENCE [LARGE SCALE GENOMIC DNA]</scope>
    <source>
        <strain>ATCC 43067 / DSM 2661 / JAL-1 / JCM 10045 / NBRC 100440</strain>
    </source>
</reference>
<reference key="2">
    <citation type="journal article" date="2012" name="RNA">
        <title>Identification of the enzyme responsible for N1-methylation of pseudouridine 54 in archaeal tRNAs.</title>
        <authorList>
            <person name="Wurm J.P."/>
            <person name="Griese M."/>
            <person name="Bahr U."/>
            <person name="Held M."/>
            <person name="Heckel A."/>
            <person name="Karas M."/>
            <person name="Soppa J."/>
            <person name="Woehnert J."/>
        </authorList>
    </citation>
    <scope>FUNCTION</scope>
    <scope>CATALYTIC ACTIVITY</scope>
</reference>
<reference key="3">
    <citation type="journal article" date="2012" name="RNA">
        <title>The archaeal COG1901/DUF358 SPOUT-methyltransferase members, together with pseudouridine synthase Pus10, catalyze the formation of 1-methylpseudouridine at position 54 of tRNA.</title>
        <authorList>
            <person name="Chatterjee K."/>
            <person name="Blaby I.K."/>
            <person name="Thiaville P.C."/>
            <person name="Majumder M."/>
            <person name="Grosjean H."/>
            <person name="Yuan Y.A."/>
            <person name="Gupta R."/>
            <person name="de Crecy-Lagard V."/>
        </authorList>
    </citation>
    <scope>FUNCTION</scope>
    <scope>CATALYTIC ACTIVITY</scope>
    <scope>GENE NAME</scope>
</reference>
<reference key="4">
    <citation type="journal article" date="2010" name="J. Mol. Cell Biol.">
        <title>Crystal structure of Mj1640/DUF358 protein reveals a putative SPOUT-class RNA methyltransferase.</title>
        <authorList>
            <person name="Chen H.Y."/>
            <person name="Yuan Y.A."/>
        </authorList>
    </citation>
    <scope>X-RAY CRYSTALLOGRAPHY (1.40 ANGSTROMS) IN COMPLEX WITH S-ADENOSYL-L-METHIONINE</scope>
    <scope>SUBUNIT</scope>
</reference>
<accession>Q59034</accession>
<protein>
    <recommendedName>
        <fullName evidence="1">tRNA (pseudouridine(54)-N(1))-methyltransferase</fullName>
        <ecNumber evidence="1">2.1.1.257</ecNumber>
    </recommendedName>
</protein>
<evidence type="ECO:0000255" key="1">
    <source>
        <dbReference type="HAMAP-Rule" id="MF_00587"/>
    </source>
</evidence>
<evidence type="ECO:0000269" key="2">
    <source>
    </source>
</evidence>
<evidence type="ECO:0000269" key="3">
    <source>
    </source>
</evidence>
<evidence type="ECO:0000269" key="4">
    <source>
    </source>
</evidence>
<evidence type="ECO:0007829" key="5">
    <source>
        <dbReference type="PDB" id="3AIA"/>
    </source>
</evidence>